<protein>
    <recommendedName>
        <fullName>Protein hit</fullName>
    </recommendedName>
</protein>
<sequence>MHCAENCIFCKIIAGDIPSAKVYEDEHVLAFLDISQVTKGHTLVIPKTHIENVYEFTDELAKQYFHAVPKIARAIRDEFEPIGLNTLNNNGEKAGQSVFHYHMHIIPRYGKGDGFGAVWKTHADDYKPEDLQNISSSIAKRLASS</sequence>
<reference key="1">
    <citation type="journal article" date="1998" name="Microbiology">
        <title>The 172 kb prkA-addAB region from 83 degrees to 97 degrees of the Bacillus subtilis chromosome contains several dysfunctional genes, the glyB marker, many genes encoding transporter proteins, and the ubiquitous hit gene.</title>
        <authorList>
            <person name="Noback M.A."/>
            <person name="Holsappel S."/>
            <person name="Kiewiet R."/>
            <person name="Terpstra P."/>
            <person name="Wambutt R."/>
            <person name="Wedler H."/>
            <person name="Venema G."/>
            <person name="Bron S."/>
        </authorList>
    </citation>
    <scope>NUCLEOTIDE SEQUENCE [GENOMIC DNA]</scope>
    <source>
        <strain>168</strain>
    </source>
</reference>
<reference key="2">
    <citation type="journal article" date="1997" name="Nature">
        <title>The complete genome sequence of the Gram-positive bacterium Bacillus subtilis.</title>
        <authorList>
            <person name="Kunst F."/>
            <person name="Ogasawara N."/>
            <person name="Moszer I."/>
            <person name="Albertini A.M."/>
            <person name="Alloni G."/>
            <person name="Azevedo V."/>
            <person name="Bertero M.G."/>
            <person name="Bessieres P."/>
            <person name="Bolotin A."/>
            <person name="Borchert S."/>
            <person name="Borriss R."/>
            <person name="Boursier L."/>
            <person name="Brans A."/>
            <person name="Braun M."/>
            <person name="Brignell S.C."/>
            <person name="Bron S."/>
            <person name="Brouillet S."/>
            <person name="Bruschi C.V."/>
            <person name="Caldwell B."/>
            <person name="Capuano V."/>
            <person name="Carter N.M."/>
            <person name="Choi S.-K."/>
            <person name="Codani J.-J."/>
            <person name="Connerton I.F."/>
            <person name="Cummings N.J."/>
            <person name="Daniel R.A."/>
            <person name="Denizot F."/>
            <person name="Devine K.M."/>
            <person name="Duesterhoeft A."/>
            <person name="Ehrlich S.D."/>
            <person name="Emmerson P.T."/>
            <person name="Entian K.-D."/>
            <person name="Errington J."/>
            <person name="Fabret C."/>
            <person name="Ferrari E."/>
            <person name="Foulger D."/>
            <person name="Fritz C."/>
            <person name="Fujita M."/>
            <person name="Fujita Y."/>
            <person name="Fuma S."/>
            <person name="Galizzi A."/>
            <person name="Galleron N."/>
            <person name="Ghim S.-Y."/>
            <person name="Glaser P."/>
            <person name="Goffeau A."/>
            <person name="Golightly E.J."/>
            <person name="Grandi G."/>
            <person name="Guiseppi G."/>
            <person name="Guy B.J."/>
            <person name="Haga K."/>
            <person name="Haiech J."/>
            <person name="Harwood C.R."/>
            <person name="Henaut A."/>
            <person name="Hilbert H."/>
            <person name="Holsappel S."/>
            <person name="Hosono S."/>
            <person name="Hullo M.-F."/>
            <person name="Itaya M."/>
            <person name="Jones L.-M."/>
            <person name="Joris B."/>
            <person name="Karamata D."/>
            <person name="Kasahara Y."/>
            <person name="Klaerr-Blanchard M."/>
            <person name="Klein C."/>
            <person name="Kobayashi Y."/>
            <person name="Koetter P."/>
            <person name="Koningstein G."/>
            <person name="Krogh S."/>
            <person name="Kumano M."/>
            <person name="Kurita K."/>
            <person name="Lapidus A."/>
            <person name="Lardinois S."/>
            <person name="Lauber J."/>
            <person name="Lazarevic V."/>
            <person name="Lee S.-M."/>
            <person name="Levine A."/>
            <person name="Liu H."/>
            <person name="Masuda S."/>
            <person name="Mauel C."/>
            <person name="Medigue C."/>
            <person name="Medina N."/>
            <person name="Mellado R.P."/>
            <person name="Mizuno M."/>
            <person name="Moestl D."/>
            <person name="Nakai S."/>
            <person name="Noback M."/>
            <person name="Noone D."/>
            <person name="O'Reilly M."/>
            <person name="Ogawa K."/>
            <person name="Ogiwara A."/>
            <person name="Oudega B."/>
            <person name="Park S.-H."/>
            <person name="Parro V."/>
            <person name="Pohl T.M."/>
            <person name="Portetelle D."/>
            <person name="Porwollik S."/>
            <person name="Prescott A.M."/>
            <person name="Presecan E."/>
            <person name="Pujic P."/>
            <person name="Purnelle B."/>
            <person name="Rapoport G."/>
            <person name="Rey M."/>
            <person name="Reynolds S."/>
            <person name="Rieger M."/>
            <person name="Rivolta C."/>
            <person name="Rocha E."/>
            <person name="Roche B."/>
            <person name="Rose M."/>
            <person name="Sadaie Y."/>
            <person name="Sato T."/>
            <person name="Scanlan E."/>
            <person name="Schleich S."/>
            <person name="Schroeter R."/>
            <person name="Scoffone F."/>
            <person name="Sekiguchi J."/>
            <person name="Sekowska A."/>
            <person name="Seror S.J."/>
            <person name="Serror P."/>
            <person name="Shin B.-S."/>
            <person name="Soldo B."/>
            <person name="Sorokin A."/>
            <person name="Tacconi E."/>
            <person name="Takagi T."/>
            <person name="Takahashi H."/>
            <person name="Takemaru K."/>
            <person name="Takeuchi M."/>
            <person name="Tamakoshi A."/>
            <person name="Tanaka T."/>
            <person name="Terpstra P."/>
            <person name="Tognoni A."/>
            <person name="Tosato V."/>
            <person name="Uchiyama S."/>
            <person name="Vandenbol M."/>
            <person name="Vannier F."/>
            <person name="Vassarotti A."/>
            <person name="Viari A."/>
            <person name="Wambutt R."/>
            <person name="Wedler E."/>
            <person name="Wedler H."/>
            <person name="Weitzenegger T."/>
            <person name="Winters P."/>
            <person name="Wipat A."/>
            <person name="Yamamoto H."/>
            <person name="Yamane K."/>
            <person name="Yasumoto K."/>
            <person name="Yata K."/>
            <person name="Yoshida K."/>
            <person name="Yoshikawa H.-F."/>
            <person name="Zumstein E."/>
            <person name="Yoshikawa H."/>
            <person name="Danchin A."/>
        </authorList>
    </citation>
    <scope>NUCLEOTIDE SEQUENCE [LARGE SCALE GENOMIC DNA]</scope>
    <source>
        <strain>168</strain>
    </source>
</reference>
<reference key="3">
    <citation type="submission" date="2009-02" db="PDB data bank">
        <title>Crystal structure of a member of HIT family of proteins from Bacillus subtilis.</title>
        <authorList>
            <consortium name="New York structural genomix research consortium (NYSGXRC)"/>
        </authorList>
    </citation>
    <scope>X-RAY CRYSTALLOGRAPHY (2.3 ANGSTROMS)</scope>
</reference>
<keyword id="KW-0002">3D-structure</keyword>
<keyword id="KW-1185">Reference proteome</keyword>
<gene>
    <name type="primary">hit</name>
    <name type="synonym">yhaE</name>
    <name type="ordered locus">BSU10030</name>
</gene>
<organism>
    <name type="scientific">Bacillus subtilis (strain 168)</name>
    <dbReference type="NCBI Taxonomy" id="224308"/>
    <lineage>
        <taxon>Bacteria</taxon>
        <taxon>Bacillati</taxon>
        <taxon>Bacillota</taxon>
        <taxon>Bacilli</taxon>
        <taxon>Bacillales</taxon>
        <taxon>Bacillaceae</taxon>
        <taxon>Bacillus</taxon>
    </lineage>
</organism>
<evidence type="ECO:0000255" key="1">
    <source>
        <dbReference type="PROSITE-ProRule" id="PRU00464"/>
    </source>
</evidence>
<evidence type="ECO:0007829" key="2">
    <source>
        <dbReference type="PDB" id="1Y23"/>
    </source>
</evidence>
<accession>O07513</accession>
<proteinExistence type="evidence at protein level"/>
<name>HIT_BACSU</name>
<feature type="chain" id="PRO_0000109807" description="Protein hit">
    <location>
        <begin position="1"/>
        <end position="145"/>
    </location>
</feature>
<feature type="domain" description="HIT" evidence="1">
    <location>
        <begin position="8"/>
        <end position="116"/>
    </location>
</feature>
<feature type="short sequence motif" description="Histidine triad motif">
    <location>
        <begin position="100"/>
        <end position="104"/>
    </location>
</feature>
<feature type="helix" evidence="2">
    <location>
        <begin position="8"/>
        <end position="13"/>
    </location>
</feature>
<feature type="strand" evidence="2">
    <location>
        <begin position="21"/>
        <end position="24"/>
    </location>
</feature>
<feature type="strand" evidence="2">
    <location>
        <begin position="26"/>
        <end position="32"/>
    </location>
</feature>
<feature type="strand" evidence="2">
    <location>
        <begin position="42"/>
        <end position="48"/>
    </location>
</feature>
<feature type="helix" evidence="2">
    <location>
        <begin position="53"/>
        <end position="55"/>
    </location>
</feature>
<feature type="helix" evidence="2">
    <location>
        <begin position="58"/>
        <end position="62"/>
    </location>
</feature>
<feature type="turn" evidence="2">
    <location>
        <begin position="63"/>
        <end position="66"/>
    </location>
</feature>
<feature type="helix" evidence="2">
    <location>
        <begin position="67"/>
        <end position="79"/>
    </location>
</feature>
<feature type="strand" evidence="2">
    <location>
        <begin position="82"/>
        <end position="91"/>
    </location>
</feature>
<feature type="helix" evidence="2">
    <location>
        <begin position="92"/>
        <end position="94"/>
    </location>
</feature>
<feature type="strand" evidence="2">
    <location>
        <begin position="98"/>
        <end position="100"/>
    </location>
</feature>
<feature type="strand" evidence="2">
    <location>
        <begin position="103"/>
        <end position="108"/>
    </location>
</feature>
<feature type="strand" evidence="2">
    <location>
        <begin position="114"/>
        <end position="119"/>
    </location>
</feature>
<feature type="helix" evidence="2">
    <location>
        <begin position="123"/>
        <end position="125"/>
    </location>
</feature>
<feature type="helix" evidence="2">
    <location>
        <begin position="128"/>
        <end position="141"/>
    </location>
</feature>
<dbReference type="EMBL" id="Y14077">
    <property type="protein sequence ID" value="CAA74410.1"/>
    <property type="molecule type" value="Genomic_DNA"/>
</dbReference>
<dbReference type="EMBL" id="AL009126">
    <property type="protein sequence ID" value="CAB12843.1"/>
    <property type="molecule type" value="Genomic_DNA"/>
</dbReference>
<dbReference type="PIR" id="A69642">
    <property type="entry name" value="A69642"/>
</dbReference>
<dbReference type="RefSeq" id="WP_003233231.1">
    <property type="nucleotide sequence ID" value="NZ_OZ025638.1"/>
</dbReference>
<dbReference type="PDB" id="1Y23">
    <property type="method" value="X-ray"/>
    <property type="resolution" value="2.30 A"/>
    <property type="chains" value="A/B/C/D/E=1-145"/>
</dbReference>
<dbReference type="PDBsum" id="1Y23"/>
<dbReference type="SMR" id="O07513"/>
<dbReference type="FunCoup" id="O07513">
    <property type="interactions" value="617"/>
</dbReference>
<dbReference type="STRING" id="224308.BSU10030"/>
<dbReference type="jPOST" id="O07513"/>
<dbReference type="PaxDb" id="224308-BSU10030"/>
<dbReference type="EnsemblBacteria" id="CAB12843">
    <property type="protein sequence ID" value="CAB12843"/>
    <property type="gene ID" value="BSU_10030"/>
</dbReference>
<dbReference type="GeneID" id="939769"/>
<dbReference type="KEGG" id="bsu:BSU10030"/>
<dbReference type="PATRIC" id="fig|224308.179.peg.1079"/>
<dbReference type="eggNOG" id="COG0537">
    <property type="taxonomic scope" value="Bacteria"/>
</dbReference>
<dbReference type="InParanoid" id="O07513"/>
<dbReference type="OrthoDB" id="9784774at2"/>
<dbReference type="PhylomeDB" id="O07513"/>
<dbReference type="BioCyc" id="BSUB:BSU10030-MONOMER"/>
<dbReference type="EvolutionaryTrace" id="O07513"/>
<dbReference type="Proteomes" id="UP000001570">
    <property type="component" value="Chromosome"/>
</dbReference>
<dbReference type="GO" id="GO:0003824">
    <property type="term" value="F:catalytic activity"/>
    <property type="evidence" value="ECO:0007669"/>
    <property type="project" value="InterPro"/>
</dbReference>
<dbReference type="GO" id="GO:0009117">
    <property type="term" value="P:nucleotide metabolic process"/>
    <property type="evidence" value="ECO:0000318"/>
    <property type="project" value="GO_Central"/>
</dbReference>
<dbReference type="CDD" id="cd01277">
    <property type="entry name" value="HINT_subgroup"/>
    <property type="match status" value="1"/>
</dbReference>
<dbReference type="FunFam" id="3.30.428.10:FF:000007">
    <property type="entry name" value="HIT family protein"/>
    <property type="match status" value="1"/>
</dbReference>
<dbReference type="Gene3D" id="1.20.5.1170">
    <property type="entry name" value="HIT-like"/>
    <property type="match status" value="1"/>
</dbReference>
<dbReference type="Gene3D" id="3.30.428.10">
    <property type="entry name" value="HIT-like"/>
    <property type="match status" value="1"/>
</dbReference>
<dbReference type="InterPro" id="IPR039384">
    <property type="entry name" value="HINT"/>
</dbReference>
<dbReference type="InterPro" id="IPR019808">
    <property type="entry name" value="Histidine_triad_CS"/>
</dbReference>
<dbReference type="InterPro" id="IPR001310">
    <property type="entry name" value="Histidine_triad_HIT"/>
</dbReference>
<dbReference type="InterPro" id="IPR011146">
    <property type="entry name" value="HIT-like"/>
</dbReference>
<dbReference type="InterPro" id="IPR036265">
    <property type="entry name" value="HIT-like_sf"/>
</dbReference>
<dbReference type="PANTHER" id="PTHR46648:SF1">
    <property type="entry name" value="ADENOSINE 5'-MONOPHOSPHORAMIDASE HNT1"/>
    <property type="match status" value="1"/>
</dbReference>
<dbReference type="PANTHER" id="PTHR46648">
    <property type="entry name" value="HIT FAMILY PROTEIN 1"/>
    <property type="match status" value="1"/>
</dbReference>
<dbReference type="Pfam" id="PF01230">
    <property type="entry name" value="HIT"/>
    <property type="match status" value="1"/>
</dbReference>
<dbReference type="PRINTS" id="PR00332">
    <property type="entry name" value="HISTRIAD"/>
</dbReference>
<dbReference type="SUPFAM" id="SSF54197">
    <property type="entry name" value="HIT-like"/>
    <property type="match status" value="1"/>
</dbReference>
<dbReference type="PROSITE" id="PS00892">
    <property type="entry name" value="HIT_1"/>
    <property type="match status" value="1"/>
</dbReference>
<dbReference type="PROSITE" id="PS51084">
    <property type="entry name" value="HIT_2"/>
    <property type="match status" value="1"/>
</dbReference>